<name>DNAK_LEPIC</name>
<comment type="function">
    <text evidence="1">Acts as a chaperone.</text>
</comment>
<comment type="induction">
    <text evidence="1">By stress conditions e.g. heat shock (By similarity).</text>
</comment>
<comment type="similarity">
    <text evidence="3">Belongs to the heat shock protein 70 family.</text>
</comment>
<sequence>MSKEKIIGIDLGTTNSVVSVMEGGDPVVIQNSEGARTTPSIVAFTAKGETLIGQFAKNQAITNAVNTIRSAKRFIGRRLNECESEMKHVSYKVIRSGNEGVKFETSAGEFTPQEISARVLMKMKQTAEDYLGQKVTKAVITVPAYFNDEQRQATKDAGRIAGLEVERIINEPTAAALAYGFDKKNVNSKIAVYDLGGGTFDISILELADGVFEVKSTNGDTHLGGDDFDMAIMEWMISEFKNQTGIDISADKNTVQRLKEAAEKAKIELSGTMSTQINLPFITADASGPKHLDMTLTRAKFDQLTKSLVDRTRIPCENALRDAGLKASDINEVILVGGSIRIPAVQELVKQVFGKEPNKSVNPDEVVAIGAAIQGGVLAGEVSDVLLLDVTPLSLGIETLGGVMTKLIERNTTIPTKKSQVFSTAADNQSAVSIHVLQGEREMASANRTLGRFDLIGIPPAPRGVPQIEVTFDIDANGIVHVSAKDLGTGKEQKIRIESSSGLSEDEIQKMVKDAEAHAAADKAQREVIEAKNELDTLTYSLEKTVNEAGDKIGANEKQLATDEIKRAREAIESNDKARIESAKASISKIATDIASKVYSQSAPGAEQAAAGGPNGGAGSNDQGNSTNNGEKVVDADYTVVDDEKK</sequence>
<protein>
    <recommendedName>
        <fullName>Chaperone protein DnaK</fullName>
    </recommendedName>
    <alternativeName>
        <fullName>HSP70</fullName>
    </alternativeName>
    <alternativeName>
        <fullName>Heat shock 70 kDa protein</fullName>
    </alternativeName>
    <alternativeName>
        <fullName>Heat shock protein 70</fullName>
    </alternativeName>
</protein>
<reference key="1">
    <citation type="journal article" date="1998" name="Gene">
        <title>Molecular analysis of the dnaK locus of Leptospira interrogans serovar Copenhageni.</title>
        <authorList>
            <person name="Ballard S.A."/>
            <person name="Go M."/>
            <person name="Segers R.P.A.M."/>
            <person name="Adler B."/>
        </authorList>
    </citation>
    <scope>NUCLEOTIDE SEQUENCE [GENOMIC DNA]</scope>
    <source>
        <strain>Wijnberg</strain>
    </source>
</reference>
<reference key="2">
    <citation type="journal article" date="2004" name="J. Bacteriol.">
        <title>Comparative genomics of two Leptospira interrogans serovars reveals novel insights into physiology and pathogenesis.</title>
        <authorList>
            <person name="Nascimento A.L.T.O."/>
            <person name="Ko A.I."/>
            <person name="Martins E.A.L."/>
            <person name="Monteiro-Vitorello C.B."/>
            <person name="Ho P.L."/>
            <person name="Haake D.A."/>
            <person name="Verjovski-Almeida S."/>
            <person name="Hartskeerl R.A."/>
            <person name="Marques M.V."/>
            <person name="Oliveira M.C."/>
            <person name="Menck C.F.M."/>
            <person name="Leite L.C.C."/>
            <person name="Carrer H."/>
            <person name="Coutinho L.L."/>
            <person name="Degrave W.M."/>
            <person name="Dellagostin O.A."/>
            <person name="El-Dorry H."/>
            <person name="Ferro E.S."/>
            <person name="Ferro M.I.T."/>
            <person name="Furlan L.R."/>
            <person name="Gamberini M."/>
            <person name="Giglioti E.A."/>
            <person name="Goes-Neto A."/>
            <person name="Goldman G.H."/>
            <person name="Goldman M.H.S."/>
            <person name="Harakava R."/>
            <person name="Jeronimo S.M.B."/>
            <person name="Junqueira-de-Azevedo I.L.M."/>
            <person name="Kimura E.T."/>
            <person name="Kuramae E.E."/>
            <person name="Lemos E.G.M."/>
            <person name="Lemos M.V.F."/>
            <person name="Marino C.L."/>
            <person name="Nunes L.R."/>
            <person name="de Oliveira R.C."/>
            <person name="Pereira G.G."/>
            <person name="Reis M.S."/>
            <person name="Schriefer A."/>
            <person name="Siqueira W.J."/>
            <person name="Sommer P."/>
            <person name="Tsai S.M."/>
            <person name="Simpson A.J.G."/>
            <person name="Ferro J.A."/>
            <person name="Camargo L.E.A."/>
            <person name="Kitajima J.P."/>
            <person name="Setubal J.C."/>
            <person name="Van Sluys M.A."/>
        </authorList>
    </citation>
    <scope>NUCLEOTIDE SEQUENCE [LARGE SCALE GENOMIC DNA]</scope>
    <source>
        <strain>Fiocruz L1-130</strain>
    </source>
</reference>
<keyword id="KW-0067">ATP-binding</keyword>
<keyword id="KW-0143">Chaperone</keyword>
<keyword id="KW-0547">Nucleotide-binding</keyword>
<keyword id="KW-0597">Phosphoprotein</keyword>
<keyword id="KW-0346">Stress response</keyword>
<organism>
    <name type="scientific">Leptospira interrogans serogroup Icterohaemorrhagiae serovar copenhageni (strain Fiocruz L1-130)</name>
    <dbReference type="NCBI Taxonomy" id="267671"/>
    <lineage>
        <taxon>Bacteria</taxon>
        <taxon>Pseudomonadati</taxon>
        <taxon>Spirochaetota</taxon>
        <taxon>Spirochaetia</taxon>
        <taxon>Leptospirales</taxon>
        <taxon>Leptospiraceae</taxon>
        <taxon>Leptospira</taxon>
    </lineage>
</organism>
<accession>P61442</accession>
<accession>O51869</accession>
<accession>P71442</accession>
<gene>
    <name type="primary">dnaK</name>
    <name type="ordered locus">LIC_10524</name>
</gene>
<evidence type="ECO:0000250" key="1"/>
<evidence type="ECO:0000256" key="2">
    <source>
        <dbReference type="SAM" id="MobiDB-lite"/>
    </source>
</evidence>
<evidence type="ECO:0000305" key="3"/>
<feature type="chain" id="PRO_0000078480" description="Chaperone protein DnaK">
    <location>
        <begin position="1"/>
        <end position="646"/>
    </location>
</feature>
<feature type="region of interest" description="Disordered" evidence="2">
    <location>
        <begin position="598"/>
        <end position="646"/>
    </location>
</feature>
<feature type="compositionally biased region" description="Low complexity" evidence="2">
    <location>
        <begin position="601"/>
        <end position="612"/>
    </location>
</feature>
<feature type="modified residue" description="Phosphothreonine; by autocatalysis" evidence="1">
    <location>
        <position position="199"/>
    </location>
</feature>
<feature type="sequence conflict" description="In Ref. 1; AAC35416." evidence="3" ref="1">
    <location>
        <position position="617"/>
    </location>
</feature>
<proteinExistence type="inferred from homology"/>
<dbReference type="EMBL" id="AF007813">
    <property type="protein sequence ID" value="AAC35416.1"/>
    <property type="molecule type" value="Genomic_DNA"/>
</dbReference>
<dbReference type="EMBL" id="AE016823">
    <property type="protein sequence ID" value="AAS69145.1"/>
    <property type="molecule type" value="Genomic_DNA"/>
</dbReference>
<dbReference type="RefSeq" id="WP_000031821.1">
    <property type="nucleotide sequence ID" value="NC_005823.1"/>
</dbReference>
<dbReference type="SMR" id="P61442"/>
<dbReference type="GeneID" id="61143879"/>
<dbReference type="KEGG" id="lic:LIC_10524"/>
<dbReference type="HOGENOM" id="CLU_005965_2_1_12"/>
<dbReference type="Proteomes" id="UP000007037">
    <property type="component" value="Chromosome I"/>
</dbReference>
<dbReference type="GO" id="GO:0005524">
    <property type="term" value="F:ATP binding"/>
    <property type="evidence" value="ECO:0007669"/>
    <property type="project" value="UniProtKB-UniRule"/>
</dbReference>
<dbReference type="GO" id="GO:0140662">
    <property type="term" value="F:ATP-dependent protein folding chaperone"/>
    <property type="evidence" value="ECO:0007669"/>
    <property type="project" value="InterPro"/>
</dbReference>
<dbReference type="GO" id="GO:0051082">
    <property type="term" value="F:unfolded protein binding"/>
    <property type="evidence" value="ECO:0007669"/>
    <property type="project" value="InterPro"/>
</dbReference>
<dbReference type="CDD" id="cd10234">
    <property type="entry name" value="ASKHA_NBD_HSP70_DnaK-like"/>
    <property type="match status" value="1"/>
</dbReference>
<dbReference type="FunFam" id="2.60.34.10:FF:000014">
    <property type="entry name" value="Chaperone protein DnaK HSP70"/>
    <property type="match status" value="1"/>
</dbReference>
<dbReference type="FunFam" id="3.30.420.40:FF:000020">
    <property type="entry name" value="Chaperone protein HscA homolog"/>
    <property type="match status" value="1"/>
</dbReference>
<dbReference type="FunFam" id="1.20.1270.10:FF:000001">
    <property type="entry name" value="Molecular chaperone DnaK"/>
    <property type="match status" value="1"/>
</dbReference>
<dbReference type="FunFam" id="3.30.420.40:FF:000004">
    <property type="entry name" value="Molecular chaperone DnaK"/>
    <property type="match status" value="1"/>
</dbReference>
<dbReference type="FunFam" id="3.90.640.10:FF:000003">
    <property type="entry name" value="Molecular chaperone DnaK"/>
    <property type="match status" value="1"/>
</dbReference>
<dbReference type="Gene3D" id="1.20.1270.10">
    <property type="match status" value="1"/>
</dbReference>
<dbReference type="Gene3D" id="3.30.420.40">
    <property type="match status" value="2"/>
</dbReference>
<dbReference type="Gene3D" id="3.90.640.10">
    <property type="entry name" value="Actin, Chain A, domain 4"/>
    <property type="match status" value="1"/>
</dbReference>
<dbReference type="Gene3D" id="2.60.34.10">
    <property type="entry name" value="Substrate Binding Domain Of DNAk, Chain A, domain 1"/>
    <property type="match status" value="1"/>
</dbReference>
<dbReference type="HAMAP" id="MF_00332">
    <property type="entry name" value="DnaK"/>
    <property type="match status" value="1"/>
</dbReference>
<dbReference type="InterPro" id="IPR043129">
    <property type="entry name" value="ATPase_NBD"/>
</dbReference>
<dbReference type="InterPro" id="IPR012725">
    <property type="entry name" value="Chaperone_DnaK"/>
</dbReference>
<dbReference type="InterPro" id="IPR018181">
    <property type="entry name" value="Heat_shock_70_CS"/>
</dbReference>
<dbReference type="InterPro" id="IPR029048">
    <property type="entry name" value="HSP70_C_sf"/>
</dbReference>
<dbReference type="InterPro" id="IPR029047">
    <property type="entry name" value="HSP70_peptide-bd_sf"/>
</dbReference>
<dbReference type="InterPro" id="IPR013126">
    <property type="entry name" value="Hsp_70_fam"/>
</dbReference>
<dbReference type="NCBIfam" id="NF001413">
    <property type="entry name" value="PRK00290.1"/>
    <property type="match status" value="1"/>
</dbReference>
<dbReference type="NCBIfam" id="NF003520">
    <property type="entry name" value="PRK05183.1"/>
    <property type="match status" value="1"/>
</dbReference>
<dbReference type="NCBIfam" id="TIGR02350">
    <property type="entry name" value="prok_dnaK"/>
    <property type="match status" value="1"/>
</dbReference>
<dbReference type="PANTHER" id="PTHR19375">
    <property type="entry name" value="HEAT SHOCK PROTEIN 70KDA"/>
    <property type="match status" value="1"/>
</dbReference>
<dbReference type="Pfam" id="PF00012">
    <property type="entry name" value="HSP70"/>
    <property type="match status" value="1"/>
</dbReference>
<dbReference type="PRINTS" id="PR00301">
    <property type="entry name" value="HEATSHOCK70"/>
</dbReference>
<dbReference type="SUPFAM" id="SSF53067">
    <property type="entry name" value="Actin-like ATPase domain"/>
    <property type="match status" value="2"/>
</dbReference>
<dbReference type="SUPFAM" id="SSF100934">
    <property type="entry name" value="Heat shock protein 70kD (HSP70), C-terminal subdomain"/>
    <property type="match status" value="1"/>
</dbReference>
<dbReference type="SUPFAM" id="SSF100920">
    <property type="entry name" value="Heat shock protein 70kD (HSP70), peptide-binding domain"/>
    <property type="match status" value="1"/>
</dbReference>
<dbReference type="PROSITE" id="PS00297">
    <property type="entry name" value="HSP70_1"/>
    <property type="match status" value="1"/>
</dbReference>
<dbReference type="PROSITE" id="PS00329">
    <property type="entry name" value="HSP70_2"/>
    <property type="match status" value="1"/>
</dbReference>